<dbReference type="EC" id="2.8.4.3" evidence="1"/>
<dbReference type="EMBL" id="CP001110">
    <property type="protein sequence ID" value="ACF42696.1"/>
    <property type="molecule type" value="Genomic_DNA"/>
</dbReference>
<dbReference type="RefSeq" id="WP_012507191.1">
    <property type="nucleotide sequence ID" value="NC_011060.1"/>
</dbReference>
<dbReference type="SMR" id="B4SCB6"/>
<dbReference type="STRING" id="324925.Ppha_0367"/>
<dbReference type="KEGG" id="pph:Ppha_0367"/>
<dbReference type="eggNOG" id="COG0621">
    <property type="taxonomic scope" value="Bacteria"/>
</dbReference>
<dbReference type="HOGENOM" id="CLU_018697_2_0_10"/>
<dbReference type="OrthoDB" id="9805215at2"/>
<dbReference type="Proteomes" id="UP000002724">
    <property type="component" value="Chromosome"/>
</dbReference>
<dbReference type="GO" id="GO:0005829">
    <property type="term" value="C:cytosol"/>
    <property type="evidence" value="ECO:0007669"/>
    <property type="project" value="TreeGrafter"/>
</dbReference>
<dbReference type="GO" id="GO:0051539">
    <property type="term" value="F:4 iron, 4 sulfur cluster binding"/>
    <property type="evidence" value="ECO:0007669"/>
    <property type="project" value="UniProtKB-UniRule"/>
</dbReference>
<dbReference type="GO" id="GO:0046872">
    <property type="term" value="F:metal ion binding"/>
    <property type="evidence" value="ECO:0007669"/>
    <property type="project" value="UniProtKB-KW"/>
</dbReference>
<dbReference type="GO" id="GO:0035597">
    <property type="term" value="F:N6-isopentenyladenosine methylthiotransferase activity"/>
    <property type="evidence" value="ECO:0007669"/>
    <property type="project" value="TreeGrafter"/>
</dbReference>
<dbReference type="CDD" id="cd01335">
    <property type="entry name" value="Radical_SAM"/>
    <property type="match status" value="1"/>
</dbReference>
<dbReference type="FunFam" id="3.40.50.12160:FF:000003">
    <property type="entry name" value="CDK5 regulatory subunit-associated protein 1"/>
    <property type="match status" value="1"/>
</dbReference>
<dbReference type="FunFam" id="3.80.30.20:FF:000001">
    <property type="entry name" value="tRNA-2-methylthio-N(6)-dimethylallyladenosine synthase 2"/>
    <property type="match status" value="1"/>
</dbReference>
<dbReference type="Gene3D" id="3.40.50.12160">
    <property type="entry name" value="Methylthiotransferase, N-terminal domain"/>
    <property type="match status" value="1"/>
</dbReference>
<dbReference type="Gene3D" id="3.80.30.20">
    <property type="entry name" value="tm_1862 like domain"/>
    <property type="match status" value="1"/>
</dbReference>
<dbReference type="HAMAP" id="MF_01864">
    <property type="entry name" value="tRNA_metthiotr_MiaB"/>
    <property type="match status" value="1"/>
</dbReference>
<dbReference type="InterPro" id="IPR006638">
    <property type="entry name" value="Elp3/MiaA/NifB-like_rSAM"/>
</dbReference>
<dbReference type="InterPro" id="IPR005839">
    <property type="entry name" value="Methylthiotransferase"/>
</dbReference>
<dbReference type="InterPro" id="IPR020612">
    <property type="entry name" value="Methylthiotransferase_CS"/>
</dbReference>
<dbReference type="InterPro" id="IPR013848">
    <property type="entry name" value="Methylthiotransferase_N"/>
</dbReference>
<dbReference type="InterPro" id="IPR038135">
    <property type="entry name" value="Methylthiotransferase_N_sf"/>
</dbReference>
<dbReference type="InterPro" id="IPR006463">
    <property type="entry name" value="MiaB_methiolase"/>
</dbReference>
<dbReference type="InterPro" id="IPR007197">
    <property type="entry name" value="rSAM"/>
</dbReference>
<dbReference type="InterPro" id="IPR023404">
    <property type="entry name" value="rSAM_horseshoe"/>
</dbReference>
<dbReference type="InterPro" id="IPR002792">
    <property type="entry name" value="TRAM_dom"/>
</dbReference>
<dbReference type="NCBIfam" id="TIGR01574">
    <property type="entry name" value="miaB-methiolase"/>
    <property type="match status" value="1"/>
</dbReference>
<dbReference type="NCBIfam" id="TIGR00089">
    <property type="entry name" value="MiaB/RimO family radical SAM methylthiotransferase"/>
    <property type="match status" value="1"/>
</dbReference>
<dbReference type="PANTHER" id="PTHR43020">
    <property type="entry name" value="CDK5 REGULATORY SUBUNIT-ASSOCIATED PROTEIN 1"/>
    <property type="match status" value="1"/>
</dbReference>
<dbReference type="PANTHER" id="PTHR43020:SF2">
    <property type="entry name" value="MITOCHONDRIAL TRNA METHYLTHIOTRANSFERASE CDK5RAP1"/>
    <property type="match status" value="1"/>
</dbReference>
<dbReference type="Pfam" id="PF04055">
    <property type="entry name" value="Radical_SAM"/>
    <property type="match status" value="1"/>
</dbReference>
<dbReference type="Pfam" id="PF01938">
    <property type="entry name" value="TRAM"/>
    <property type="match status" value="1"/>
</dbReference>
<dbReference type="Pfam" id="PF00919">
    <property type="entry name" value="UPF0004"/>
    <property type="match status" value="1"/>
</dbReference>
<dbReference type="SFLD" id="SFLDF00273">
    <property type="entry name" value="(dimethylallyl)adenosine_tRNA"/>
    <property type="match status" value="1"/>
</dbReference>
<dbReference type="SFLD" id="SFLDG01082">
    <property type="entry name" value="B12-binding_domain_containing"/>
    <property type="match status" value="1"/>
</dbReference>
<dbReference type="SFLD" id="SFLDF00413">
    <property type="entry name" value="CDK5RAP1"/>
    <property type="match status" value="1"/>
</dbReference>
<dbReference type="SFLD" id="SFLDG01061">
    <property type="entry name" value="methylthiotransferase"/>
    <property type="match status" value="1"/>
</dbReference>
<dbReference type="SMART" id="SM00729">
    <property type="entry name" value="Elp3"/>
    <property type="match status" value="1"/>
</dbReference>
<dbReference type="SUPFAM" id="SSF102114">
    <property type="entry name" value="Radical SAM enzymes"/>
    <property type="match status" value="1"/>
</dbReference>
<dbReference type="PROSITE" id="PS51449">
    <property type="entry name" value="MTTASE_N"/>
    <property type="match status" value="1"/>
</dbReference>
<dbReference type="PROSITE" id="PS01278">
    <property type="entry name" value="MTTASE_RADICAL"/>
    <property type="match status" value="1"/>
</dbReference>
<dbReference type="PROSITE" id="PS51918">
    <property type="entry name" value="RADICAL_SAM"/>
    <property type="match status" value="1"/>
</dbReference>
<dbReference type="PROSITE" id="PS50926">
    <property type="entry name" value="TRAM"/>
    <property type="match status" value="1"/>
</dbReference>
<organism>
    <name type="scientific">Pelodictyon phaeoclathratiforme (strain DSM 5477 / BU-1)</name>
    <dbReference type="NCBI Taxonomy" id="324925"/>
    <lineage>
        <taxon>Bacteria</taxon>
        <taxon>Pseudomonadati</taxon>
        <taxon>Chlorobiota</taxon>
        <taxon>Chlorobiia</taxon>
        <taxon>Chlorobiales</taxon>
        <taxon>Chlorobiaceae</taxon>
        <taxon>Chlorobium/Pelodictyon group</taxon>
        <taxon>Pelodictyon</taxon>
    </lineage>
</organism>
<protein>
    <recommendedName>
        <fullName evidence="1">tRNA-2-methylthio-N(6)-dimethylallyladenosine synthase</fullName>
        <ecNumber evidence="1">2.8.4.3</ecNumber>
    </recommendedName>
    <alternativeName>
        <fullName evidence="1">(Dimethylallyl)adenosine tRNA methylthiotransferase MiaB</fullName>
    </alternativeName>
    <alternativeName>
        <fullName evidence="1">tRNA-i(6)A37 methylthiotransferase</fullName>
    </alternativeName>
</protein>
<evidence type="ECO:0000255" key="1">
    <source>
        <dbReference type="HAMAP-Rule" id="MF_01864"/>
    </source>
</evidence>
<evidence type="ECO:0000255" key="2">
    <source>
        <dbReference type="PROSITE-ProRule" id="PRU01266"/>
    </source>
</evidence>
<accession>B4SCB6</accession>
<keyword id="KW-0004">4Fe-4S</keyword>
<keyword id="KW-0963">Cytoplasm</keyword>
<keyword id="KW-0408">Iron</keyword>
<keyword id="KW-0411">Iron-sulfur</keyword>
<keyword id="KW-0479">Metal-binding</keyword>
<keyword id="KW-1185">Reference proteome</keyword>
<keyword id="KW-0949">S-adenosyl-L-methionine</keyword>
<keyword id="KW-0808">Transferase</keyword>
<keyword id="KW-0819">tRNA processing</keyword>
<sequence length="440" mass="48368">MTTGGKNTFYIHTFGCQMNQADSATITSLLQQAGYVAAESEDRAGIILLNTCAVRENAVDRIEHYLQHLQGLKKRDKRLIVGILGCIPQHQREEMFATSPAIDLLAGPDTYRTLPQLIEQARSGAKPFSLDFNVAETYEGIDPVRQGSISAFVPVMRGCNNMCAYCVVPFTRGRERSHPFRAVMGEVQKLVASGYSEITLLGQNVNSYDDPEQGVNFAALLDAVSCAAPQARVRFTTSHPKDISGELVRTIANRPNICNHIHLPVQSGSTATLGRMNRGHTIEEYLEKIALIRSLLPGVTLSTDIIAGFCGEQEEDHQASLELLSTLRFDSAYMFYYSTRPGTFAARTLVDDVPEVVKKRRLQEIIDLQNTISGELFQQAIGSVVEVLAESESKRSAEQLMGRTPGNRAVVFDREGYRPGDLVRVLITAATSATLTGRPV</sequence>
<gene>
    <name evidence="1" type="primary">miaB</name>
    <name type="ordered locus">Ppha_0367</name>
</gene>
<reference key="1">
    <citation type="submission" date="2008-06" db="EMBL/GenBank/DDBJ databases">
        <title>Complete sequence of Pelodictyon phaeoclathratiforme BU-1.</title>
        <authorList>
            <consortium name="US DOE Joint Genome Institute"/>
            <person name="Lucas S."/>
            <person name="Copeland A."/>
            <person name="Lapidus A."/>
            <person name="Glavina del Rio T."/>
            <person name="Dalin E."/>
            <person name="Tice H."/>
            <person name="Bruce D."/>
            <person name="Goodwin L."/>
            <person name="Pitluck S."/>
            <person name="Schmutz J."/>
            <person name="Larimer F."/>
            <person name="Land M."/>
            <person name="Hauser L."/>
            <person name="Kyrpides N."/>
            <person name="Mikhailova N."/>
            <person name="Liu Z."/>
            <person name="Li T."/>
            <person name="Zhao F."/>
            <person name="Overmann J."/>
            <person name="Bryant D.A."/>
            <person name="Richardson P."/>
        </authorList>
    </citation>
    <scope>NUCLEOTIDE SEQUENCE [LARGE SCALE GENOMIC DNA]</scope>
    <source>
        <strain>DSM 5477 / BU-1</strain>
    </source>
</reference>
<comment type="function">
    <text evidence="1">Catalyzes the methylthiolation of N6-(dimethylallyl)adenosine (i(6)A), leading to the formation of 2-methylthio-N6-(dimethylallyl)adenosine (ms(2)i(6)A) at position 37 in tRNAs that read codons beginning with uridine.</text>
</comment>
<comment type="catalytic activity">
    <reaction evidence="1">
        <text>N(6)-dimethylallyladenosine(37) in tRNA + (sulfur carrier)-SH + AH2 + 2 S-adenosyl-L-methionine = 2-methylsulfanyl-N(6)-dimethylallyladenosine(37) in tRNA + (sulfur carrier)-H + 5'-deoxyadenosine + L-methionine + A + S-adenosyl-L-homocysteine + 2 H(+)</text>
        <dbReference type="Rhea" id="RHEA:37067"/>
        <dbReference type="Rhea" id="RHEA-COMP:10375"/>
        <dbReference type="Rhea" id="RHEA-COMP:10376"/>
        <dbReference type="Rhea" id="RHEA-COMP:14737"/>
        <dbReference type="Rhea" id="RHEA-COMP:14739"/>
        <dbReference type="ChEBI" id="CHEBI:13193"/>
        <dbReference type="ChEBI" id="CHEBI:15378"/>
        <dbReference type="ChEBI" id="CHEBI:17319"/>
        <dbReference type="ChEBI" id="CHEBI:17499"/>
        <dbReference type="ChEBI" id="CHEBI:29917"/>
        <dbReference type="ChEBI" id="CHEBI:57844"/>
        <dbReference type="ChEBI" id="CHEBI:57856"/>
        <dbReference type="ChEBI" id="CHEBI:59789"/>
        <dbReference type="ChEBI" id="CHEBI:64428"/>
        <dbReference type="ChEBI" id="CHEBI:74415"/>
        <dbReference type="ChEBI" id="CHEBI:74417"/>
        <dbReference type="EC" id="2.8.4.3"/>
    </reaction>
</comment>
<comment type="cofactor">
    <cofactor evidence="1">
        <name>[4Fe-4S] cluster</name>
        <dbReference type="ChEBI" id="CHEBI:49883"/>
    </cofactor>
    <text evidence="1">Binds 2 [4Fe-4S] clusters. One cluster is coordinated with 3 cysteines and an exchangeable S-adenosyl-L-methionine.</text>
</comment>
<comment type="subunit">
    <text evidence="1">Monomer.</text>
</comment>
<comment type="subcellular location">
    <subcellularLocation>
        <location evidence="1">Cytoplasm</location>
    </subcellularLocation>
</comment>
<comment type="similarity">
    <text evidence="1">Belongs to the methylthiotransferase family. MiaB subfamily.</text>
</comment>
<feature type="chain" id="PRO_0000374431" description="tRNA-2-methylthio-N(6)-dimethylallyladenosine synthase">
    <location>
        <begin position="1"/>
        <end position="440"/>
    </location>
</feature>
<feature type="domain" description="MTTase N-terminal" evidence="1">
    <location>
        <begin position="7"/>
        <end position="123"/>
    </location>
</feature>
<feature type="domain" description="Radical SAM core" evidence="2">
    <location>
        <begin position="145"/>
        <end position="375"/>
    </location>
</feature>
<feature type="domain" description="TRAM" evidence="1">
    <location>
        <begin position="378"/>
        <end position="440"/>
    </location>
</feature>
<feature type="binding site" evidence="1">
    <location>
        <position position="16"/>
    </location>
    <ligand>
        <name>[4Fe-4S] cluster</name>
        <dbReference type="ChEBI" id="CHEBI:49883"/>
        <label>1</label>
    </ligand>
</feature>
<feature type="binding site" evidence="1">
    <location>
        <position position="52"/>
    </location>
    <ligand>
        <name>[4Fe-4S] cluster</name>
        <dbReference type="ChEBI" id="CHEBI:49883"/>
        <label>1</label>
    </ligand>
</feature>
<feature type="binding site" evidence="1">
    <location>
        <position position="86"/>
    </location>
    <ligand>
        <name>[4Fe-4S] cluster</name>
        <dbReference type="ChEBI" id="CHEBI:49883"/>
        <label>1</label>
    </ligand>
</feature>
<feature type="binding site" evidence="1">
    <location>
        <position position="159"/>
    </location>
    <ligand>
        <name>[4Fe-4S] cluster</name>
        <dbReference type="ChEBI" id="CHEBI:49883"/>
        <label>2</label>
        <note>4Fe-4S-S-AdoMet</note>
    </ligand>
</feature>
<feature type="binding site" evidence="1">
    <location>
        <position position="163"/>
    </location>
    <ligand>
        <name>[4Fe-4S] cluster</name>
        <dbReference type="ChEBI" id="CHEBI:49883"/>
        <label>2</label>
        <note>4Fe-4S-S-AdoMet</note>
    </ligand>
</feature>
<feature type="binding site" evidence="1">
    <location>
        <position position="166"/>
    </location>
    <ligand>
        <name>[4Fe-4S] cluster</name>
        <dbReference type="ChEBI" id="CHEBI:49883"/>
        <label>2</label>
        <note>4Fe-4S-S-AdoMet</note>
    </ligand>
</feature>
<name>MIAB_PELPB</name>
<proteinExistence type="inferred from homology"/>